<reference key="1">
    <citation type="journal article" date="2002" name="Nature">
        <title>The genome sequence of Schizosaccharomyces pombe.</title>
        <authorList>
            <person name="Wood V."/>
            <person name="Gwilliam R."/>
            <person name="Rajandream M.A."/>
            <person name="Lyne M.H."/>
            <person name="Lyne R."/>
            <person name="Stewart A."/>
            <person name="Sgouros J.G."/>
            <person name="Peat N."/>
            <person name="Hayles J."/>
            <person name="Baker S.G."/>
            <person name="Basham D."/>
            <person name="Bowman S."/>
            <person name="Brooks K."/>
            <person name="Brown D."/>
            <person name="Brown S."/>
            <person name="Chillingworth T."/>
            <person name="Churcher C.M."/>
            <person name="Collins M."/>
            <person name="Connor R."/>
            <person name="Cronin A."/>
            <person name="Davis P."/>
            <person name="Feltwell T."/>
            <person name="Fraser A."/>
            <person name="Gentles S."/>
            <person name="Goble A."/>
            <person name="Hamlin N."/>
            <person name="Harris D.E."/>
            <person name="Hidalgo J."/>
            <person name="Hodgson G."/>
            <person name="Holroyd S."/>
            <person name="Hornsby T."/>
            <person name="Howarth S."/>
            <person name="Huckle E.J."/>
            <person name="Hunt S."/>
            <person name="Jagels K."/>
            <person name="James K.D."/>
            <person name="Jones L."/>
            <person name="Jones M."/>
            <person name="Leather S."/>
            <person name="McDonald S."/>
            <person name="McLean J."/>
            <person name="Mooney P."/>
            <person name="Moule S."/>
            <person name="Mungall K.L."/>
            <person name="Murphy L.D."/>
            <person name="Niblett D."/>
            <person name="Odell C."/>
            <person name="Oliver K."/>
            <person name="O'Neil S."/>
            <person name="Pearson D."/>
            <person name="Quail M.A."/>
            <person name="Rabbinowitsch E."/>
            <person name="Rutherford K.M."/>
            <person name="Rutter S."/>
            <person name="Saunders D."/>
            <person name="Seeger K."/>
            <person name="Sharp S."/>
            <person name="Skelton J."/>
            <person name="Simmonds M.N."/>
            <person name="Squares R."/>
            <person name="Squares S."/>
            <person name="Stevens K."/>
            <person name="Taylor K."/>
            <person name="Taylor R.G."/>
            <person name="Tivey A."/>
            <person name="Walsh S.V."/>
            <person name="Warren T."/>
            <person name="Whitehead S."/>
            <person name="Woodward J.R."/>
            <person name="Volckaert G."/>
            <person name="Aert R."/>
            <person name="Robben J."/>
            <person name="Grymonprez B."/>
            <person name="Weltjens I."/>
            <person name="Vanstreels E."/>
            <person name="Rieger M."/>
            <person name="Schaefer M."/>
            <person name="Mueller-Auer S."/>
            <person name="Gabel C."/>
            <person name="Fuchs M."/>
            <person name="Duesterhoeft A."/>
            <person name="Fritzc C."/>
            <person name="Holzer E."/>
            <person name="Moestl D."/>
            <person name="Hilbert H."/>
            <person name="Borzym K."/>
            <person name="Langer I."/>
            <person name="Beck A."/>
            <person name="Lehrach H."/>
            <person name="Reinhardt R."/>
            <person name="Pohl T.M."/>
            <person name="Eger P."/>
            <person name="Zimmermann W."/>
            <person name="Wedler H."/>
            <person name="Wambutt R."/>
            <person name="Purnelle B."/>
            <person name="Goffeau A."/>
            <person name="Cadieu E."/>
            <person name="Dreano S."/>
            <person name="Gloux S."/>
            <person name="Lelaure V."/>
            <person name="Mottier S."/>
            <person name="Galibert F."/>
            <person name="Aves S.J."/>
            <person name="Xiang Z."/>
            <person name="Hunt C."/>
            <person name="Moore K."/>
            <person name="Hurst S.M."/>
            <person name="Lucas M."/>
            <person name="Rochet M."/>
            <person name="Gaillardin C."/>
            <person name="Tallada V.A."/>
            <person name="Garzon A."/>
            <person name="Thode G."/>
            <person name="Daga R.R."/>
            <person name="Cruzado L."/>
            <person name="Jimenez J."/>
            <person name="Sanchez M."/>
            <person name="del Rey F."/>
            <person name="Benito J."/>
            <person name="Dominguez A."/>
            <person name="Revuelta J.L."/>
            <person name="Moreno S."/>
            <person name="Armstrong J."/>
            <person name="Forsburg S.L."/>
            <person name="Cerutti L."/>
            <person name="Lowe T."/>
            <person name="McCombie W.R."/>
            <person name="Paulsen I."/>
            <person name="Potashkin J."/>
            <person name="Shpakovski G.V."/>
            <person name="Ussery D."/>
            <person name="Barrell B.G."/>
            <person name="Nurse P."/>
        </authorList>
    </citation>
    <scope>NUCLEOTIDE SEQUENCE [LARGE SCALE GENOMIC DNA]</scope>
    <source>
        <strain>972 / ATCC 24843</strain>
    </source>
</reference>
<reference key="2">
    <citation type="journal article" date="2006" name="Nat. Biotechnol.">
        <title>ORFeome cloning and global analysis of protein localization in the fission yeast Schizosaccharomyces pombe.</title>
        <authorList>
            <person name="Matsuyama A."/>
            <person name="Arai R."/>
            <person name="Yashiroda Y."/>
            <person name="Shirai A."/>
            <person name="Kamata A."/>
            <person name="Sekido S."/>
            <person name="Kobayashi Y."/>
            <person name="Hashimoto A."/>
            <person name="Hamamoto M."/>
            <person name="Hiraoka Y."/>
            <person name="Horinouchi S."/>
            <person name="Yoshida M."/>
        </authorList>
    </citation>
    <scope>SUBCELLULAR LOCATION [LARGE SCALE ANALYSIS]</scope>
</reference>
<dbReference type="EMBL" id="CU329672">
    <property type="protein sequence ID" value="CAA20844.1"/>
    <property type="molecule type" value="Genomic_DNA"/>
</dbReference>
<dbReference type="PIR" id="T41251">
    <property type="entry name" value="T41251"/>
</dbReference>
<dbReference type="RefSeq" id="NP_588334.1">
    <property type="nucleotide sequence ID" value="NM_001023325.2"/>
</dbReference>
<dbReference type="SMR" id="O74493"/>
<dbReference type="BioGRID" id="275900">
    <property type="interactions" value="6"/>
</dbReference>
<dbReference type="STRING" id="284812.O74493"/>
<dbReference type="iPTMnet" id="O74493"/>
<dbReference type="PaxDb" id="4896-SPCC285.05.1"/>
<dbReference type="EnsemblFungi" id="SPCC285.05.1">
    <property type="protein sequence ID" value="SPCC285.05.1:pep"/>
    <property type="gene ID" value="SPCC285.05"/>
</dbReference>
<dbReference type="KEGG" id="spo:2539334"/>
<dbReference type="PomBase" id="SPCC285.05"/>
<dbReference type="VEuPathDB" id="FungiDB:SPCC285.05"/>
<dbReference type="eggNOG" id="ENOG502QQPU">
    <property type="taxonomic scope" value="Eukaryota"/>
</dbReference>
<dbReference type="HOGENOM" id="CLU_031475_0_1_1"/>
<dbReference type="InParanoid" id="O74493"/>
<dbReference type="OMA" id="WAHYLVE"/>
<dbReference type="PhylomeDB" id="O74493"/>
<dbReference type="PRO" id="PR:O74493"/>
<dbReference type="Proteomes" id="UP000002485">
    <property type="component" value="Chromosome III"/>
</dbReference>
<dbReference type="GO" id="GO:0005783">
    <property type="term" value="C:endoplasmic reticulum"/>
    <property type="evidence" value="ECO:0007005"/>
    <property type="project" value="PomBase"/>
</dbReference>
<dbReference type="GO" id="GO:0016020">
    <property type="term" value="C:membrane"/>
    <property type="evidence" value="ECO:0000305"/>
    <property type="project" value="PomBase"/>
</dbReference>
<dbReference type="GO" id="GO:0003824">
    <property type="term" value="F:catalytic activity"/>
    <property type="evidence" value="ECO:0007669"/>
    <property type="project" value="InterPro"/>
</dbReference>
<dbReference type="GO" id="GO:0015211">
    <property type="term" value="F:purine nucleoside transmembrane transporter activity"/>
    <property type="evidence" value="ECO:0000255"/>
    <property type="project" value="PomBase"/>
</dbReference>
<dbReference type="GO" id="GO:0009116">
    <property type="term" value="P:nucleoside metabolic process"/>
    <property type="evidence" value="ECO:0007669"/>
    <property type="project" value="InterPro"/>
</dbReference>
<dbReference type="Gene3D" id="3.40.50.1580">
    <property type="entry name" value="Nucleoside phosphorylase domain"/>
    <property type="match status" value="1"/>
</dbReference>
<dbReference type="InterPro" id="IPR035994">
    <property type="entry name" value="Nucleoside_phosphorylase_sf"/>
</dbReference>
<dbReference type="InterPro" id="IPR009486">
    <property type="entry name" value="Pur_nuclsid_perm"/>
</dbReference>
<dbReference type="PANTHER" id="PTHR38643">
    <property type="entry name" value="PURINE NUCLEOSIDE PERMEASE C285.05-RELATED"/>
    <property type="match status" value="1"/>
</dbReference>
<dbReference type="PANTHER" id="PTHR38643:SF1">
    <property type="entry name" value="PURINE NUCLEOSIDE PERMEASE C285.05-RELATED"/>
    <property type="match status" value="1"/>
</dbReference>
<dbReference type="Pfam" id="PF06516">
    <property type="entry name" value="NUP"/>
    <property type="match status" value="1"/>
</dbReference>
<dbReference type="PIRSF" id="PIRSF013171">
    <property type="entry name" value="Pur_nuclsid_perm"/>
    <property type="match status" value="1"/>
</dbReference>
<accession>O74493</accession>
<keyword id="KW-0256">Endoplasmic reticulum</keyword>
<keyword id="KW-1185">Reference proteome</keyword>
<keyword id="KW-0732">Signal</keyword>
<keyword id="KW-0813">Transport</keyword>
<name>NUP_SCHPO</name>
<sequence>MLFLKLVASVLALMTIVPAQAGLIGKRSVFKPKVMIINMFSLEANAWLSQMDDLYANNITVVGLNRLYPQVHCNTQQTICQMTTGEGKSNAASSIMALTLSPKFDLTETFFLISGIAGINPYAASLGSVGVARFAVDIDLINSVDLRELPSYFQSSGWEIDTDPYENGSSNEIVYPESMPYQTNLYELNNTLITAAMEIIKDVVLEDNEKAASYRKLYNESAARRPPFITQCDTATGDNYWAGTYMGDFVSNITNVLTNSTGHYCTTQQEDNASLTALTRASFDGLVNINRVVIMRSGSDFDRGAGNITALANLLNSTGHVSSLACDNLYHAGAPLIDHIVNHWSYWT</sequence>
<evidence type="ECO:0000250" key="1">
    <source>
        <dbReference type="UniProtKB" id="Q5AGW8"/>
    </source>
</evidence>
<evidence type="ECO:0000255" key="2"/>
<evidence type="ECO:0000269" key="3">
    <source>
    </source>
</evidence>
<evidence type="ECO:0000305" key="4"/>
<evidence type="ECO:0000312" key="5">
    <source>
        <dbReference type="PomBase" id="SPCC285.05"/>
    </source>
</evidence>
<feature type="signal peptide" evidence="2">
    <location>
        <begin position="1"/>
        <end position="21"/>
    </location>
</feature>
<feature type="chain" id="PRO_0000372355" description="Probable purine nucleoside permease C285.05">
    <location>
        <begin position="22"/>
        <end position="348"/>
    </location>
</feature>
<organism>
    <name type="scientific">Schizosaccharomyces pombe (strain 972 / ATCC 24843)</name>
    <name type="common">Fission yeast</name>
    <dbReference type="NCBI Taxonomy" id="284812"/>
    <lineage>
        <taxon>Eukaryota</taxon>
        <taxon>Fungi</taxon>
        <taxon>Dikarya</taxon>
        <taxon>Ascomycota</taxon>
        <taxon>Taphrinomycotina</taxon>
        <taxon>Schizosaccharomycetes</taxon>
        <taxon>Schizosaccharomycetales</taxon>
        <taxon>Schizosaccharomycetaceae</taxon>
        <taxon>Schizosaccharomyces</taxon>
    </lineage>
</organism>
<comment type="function">
    <text evidence="1">Probable nucleoside permease that transports adenosine and guanosine.</text>
</comment>
<comment type="subcellular location">
    <subcellularLocation>
        <location evidence="3">Endoplasmic reticulum</location>
    </subcellularLocation>
</comment>
<comment type="similarity">
    <text evidence="4">Belongs to the NUP family.</text>
</comment>
<proteinExistence type="inferred from homology"/>
<protein>
    <recommendedName>
        <fullName evidence="1">Probable purine nucleoside permease C285.05</fullName>
    </recommendedName>
</protein>
<gene>
    <name evidence="5" type="ORF">SPCC285.05</name>
</gene>